<evidence type="ECO:0000250" key="1"/>
<evidence type="ECO:0000255" key="2">
    <source>
        <dbReference type="HAMAP-Rule" id="MF_00047"/>
    </source>
</evidence>
<organism>
    <name type="scientific">Shewanella baltica (strain OS223)</name>
    <dbReference type="NCBI Taxonomy" id="407976"/>
    <lineage>
        <taxon>Bacteria</taxon>
        <taxon>Pseudomonadati</taxon>
        <taxon>Pseudomonadota</taxon>
        <taxon>Gammaproteobacteria</taxon>
        <taxon>Alteromonadales</taxon>
        <taxon>Shewanellaceae</taxon>
        <taxon>Shewanella</taxon>
    </lineage>
</organism>
<gene>
    <name evidence="2" type="primary">ddl</name>
    <name type="ordered locus">Sbal223_2294</name>
</gene>
<feature type="chain" id="PRO_1000189744" description="D-alanine--D-alanine ligase">
    <location>
        <begin position="1"/>
        <end position="337"/>
    </location>
</feature>
<feature type="domain" description="ATP-grasp" evidence="2">
    <location>
        <begin position="124"/>
        <end position="330"/>
    </location>
</feature>
<feature type="binding site" evidence="2">
    <location>
        <begin position="154"/>
        <end position="209"/>
    </location>
    <ligand>
        <name>ATP</name>
        <dbReference type="ChEBI" id="CHEBI:30616"/>
    </ligand>
</feature>
<feature type="binding site" evidence="2">
    <location>
        <position position="284"/>
    </location>
    <ligand>
        <name>Mg(2+)</name>
        <dbReference type="ChEBI" id="CHEBI:18420"/>
        <label>1</label>
    </ligand>
</feature>
<feature type="binding site" evidence="2">
    <location>
        <position position="297"/>
    </location>
    <ligand>
        <name>Mg(2+)</name>
        <dbReference type="ChEBI" id="CHEBI:18420"/>
        <label>1</label>
    </ligand>
</feature>
<feature type="binding site" evidence="2">
    <location>
        <position position="297"/>
    </location>
    <ligand>
        <name>Mg(2+)</name>
        <dbReference type="ChEBI" id="CHEBI:18420"/>
        <label>2</label>
    </ligand>
</feature>
<feature type="binding site" evidence="2">
    <location>
        <position position="299"/>
    </location>
    <ligand>
        <name>Mg(2+)</name>
        <dbReference type="ChEBI" id="CHEBI:18420"/>
        <label>2</label>
    </ligand>
</feature>
<protein>
    <recommendedName>
        <fullName evidence="2">D-alanine--D-alanine ligase</fullName>
        <ecNumber evidence="2">6.3.2.4</ecNumber>
    </recommendedName>
    <alternativeName>
        <fullName evidence="2">D-Ala-D-Ala ligase</fullName>
    </alternativeName>
    <alternativeName>
        <fullName evidence="2">D-alanylalanine synthetase</fullName>
    </alternativeName>
</protein>
<comment type="function">
    <text evidence="2">Cell wall formation.</text>
</comment>
<comment type="catalytic activity">
    <reaction evidence="2">
        <text>2 D-alanine + ATP = D-alanyl-D-alanine + ADP + phosphate + H(+)</text>
        <dbReference type="Rhea" id="RHEA:11224"/>
        <dbReference type="ChEBI" id="CHEBI:15378"/>
        <dbReference type="ChEBI" id="CHEBI:30616"/>
        <dbReference type="ChEBI" id="CHEBI:43474"/>
        <dbReference type="ChEBI" id="CHEBI:57416"/>
        <dbReference type="ChEBI" id="CHEBI:57822"/>
        <dbReference type="ChEBI" id="CHEBI:456216"/>
        <dbReference type="EC" id="6.3.2.4"/>
    </reaction>
</comment>
<comment type="cofactor">
    <cofactor evidence="1">
        <name>Mg(2+)</name>
        <dbReference type="ChEBI" id="CHEBI:18420"/>
    </cofactor>
    <cofactor evidence="1">
        <name>Mn(2+)</name>
        <dbReference type="ChEBI" id="CHEBI:29035"/>
    </cofactor>
    <text evidence="1">Binds 2 magnesium or manganese ions per subunit.</text>
</comment>
<comment type="pathway">
    <text evidence="2">Cell wall biogenesis; peptidoglycan biosynthesis.</text>
</comment>
<comment type="subcellular location">
    <subcellularLocation>
        <location evidence="2">Cytoplasm</location>
    </subcellularLocation>
</comment>
<comment type="similarity">
    <text evidence="2">Belongs to the D-alanine--D-alanine ligase family.</text>
</comment>
<proteinExistence type="inferred from homology"/>
<keyword id="KW-0067">ATP-binding</keyword>
<keyword id="KW-0133">Cell shape</keyword>
<keyword id="KW-0961">Cell wall biogenesis/degradation</keyword>
<keyword id="KW-0963">Cytoplasm</keyword>
<keyword id="KW-0436">Ligase</keyword>
<keyword id="KW-0460">Magnesium</keyword>
<keyword id="KW-0464">Manganese</keyword>
<keyword id="KW-0479">Metal-binding</keyword>
<keyword id="KW-0547">Nucleotide-binding</keyword>
<keyword id="KW-0573">Peptidoglycan synthesis</keyword>
<sequence>MSKINLLLLCGGGSAEHDISLMSANYFETSLAKSEQFSVLRVELDKFGQYRTAAGDDCELTNSREIRFRDESKTPWPVDYVIPCIHGYPGETGDIQSYFNLIQLPYFGCESEASSNCFNKITAKMWFSALGIPNTPYIFLNQFDDAAIEQTQTALAQWGSIFVKAASQGSSVGCYKVDDSAKVAGVLKDAFGYAPYVIVEKTIKARELEVAVYEYNGEVVATVPGEIICDTNTFYTFDEKYAKNSKARTDVVAQHVSAEISEQIRAYAIKAFKGMKLRHLSRIDFFLTADNEILLNEINTFPGSTPISMFPKMLQNHGHDFTEYLSLVINGQLTAKS</sequence>
<reference key="1">
    <citation type="submission" date="2008-12" db="EMBL/GenBank/DDBJ databases">
        <title>Complete sequence of chromosome of Shewanella baltica OS223.</title>
        <authorList>
            <consortium name="US DOE Joint Genome Institute"/>
            <person name="Lucas S."/>
            <person name="Copeland A."/>
            <person name="Lapidus A."/>
            <person name="Glavina del Rio T."/>
            <person name="Dalin E."/>
            <person name="Tice H."/>
            <person name="Bruce D."/>
            <person name="Goodwin L."/>
            <person name="Pitluck S."/>
            <person name="Chertkov O."/>
            <person name="Meincke L."/>
            <person name="Brettin T."/>
            <person name="Detter J.C."/>
            <person name="Han C."/>
            <person name="Kuske C.R."/>
            <person name="Larimer F."/>
            <person name="Land M."/>
            <person name="Hauser L."/>
            <person name="Kyrpides N."/>
            <person name="Ovchinnikova G."/>
            <person name="Brettar I."/>
            <person name="Rodrigues J."/>
            <person name="Konstantinidis K."/>
            <person name="Tiedje J."/>
        </authorList>
    </citation>
    <scope>NUCLEOTIDE SEQUENCE [LARGE SCALE GENOMIC DNA]</scope>
    <source>
        <strain>OS223</strain>
    </source>
</reference>
<name>DDL_SHEB2</name>
<dbReference type="EC" id="6.3.2.4" evidence="2"/>
<dbReference type="EMBL" id="CP001252">
    <property type="protein sequence ID" value="ACK46793.1"/>
    <property type="molecule type" value="Genomic_DNA"/>
</dbReference>
<dbReference type="RefSeq" id="WP_012587740.1">
    <property type="nucleotide sequence ID" value="NC_011663.1"/>
</dbReference>
<dbReference type="SMR" id="B8E569"/>
<dbReference type="KEGG" id="sbp:Sbal223_2294"/>
<dbReference type="HOGENOM" id="CLU_039268_0_0_6"/>
<dbReference type="UniPathway" id="UPA00219"/>
<dbReference type="Proteomes" id="UP000002507">
    <property type="component" value="Chromosome"/>
</dbReference>
<dbReference type="GO" id="GO:0005829">
    <property type="term" value="C:cytosol"/>
    <property type="evidence" value="ECO:0007669"/>
    <property type="project" value="TreeGrafter"/>
</dbReference>
<dbReference type="GO" id="GO:0005524">
    <property type="term" value="F:ATP binding"/>
    <property type="evidence" value="ECO:0007669"/>
    <property type="project" value="UniProtKB-KW"/>
</dbReference>
<dbReference type="GO" id="GO:0008716">
    <property type="term" value="F:D-alanine-D-alanine ligase activity"/>
    <property type="evidence" value="ECO:0007669"/>
    <property type="project" value="UniProtKB-UniRule"/>
</dbReference>
<dbReference type="GO" id="GO:0046872">
    <property type="term" value="F:metal ion binding"/>
    <property type="evidence" value="ECO:0007669"/>
    <property type="project" value="UniProtKB-KW"/>
</dbReference>
<dbReference type="GO" id="GO:0071555">
    <property type="term" value="P:cell wall organization"/>
    <property type="evidence" value="ECO:0007669"/>
    <property type="project" value="UniProtKB-KW"/>
</dbReference>
<dbReference type="GO" id="GO:0009252">
    <property type="term" value="P:peptidoglycan biosynthetic process"/>
    <property type="evidence" value="ECO:0007669"/>
    <property type="project" value="UniProtKB-UniRule"/>
</dbReference>
<dbReference type="GO" id="GO:0008360">
    <property type="term" value="P:regulation of cell shape"/>
    <property type="evidence" value="ECO:0007669"/>
    <property type="project" value="UniProtKB-KW"/>
</dbReference>
<dbReference type="FunFam" id="3.40.50.20:FF:000034">
    <property type="entry name" value="D-alanine--D-alanine ligase"/>
    <property type="match status" value="1"/>
</dbReference>
<dbReference type="Gene3D" id="3.40.50.20">
    <property type="match status" value="1"/>
</dbReference>
<dbReference type="Gene3D" id="3.30.1490.20">
    <property type="entry name" value="ATP-grasp fold, A domain"/>
    <property type="match status" value="1"/>
</dbReference>
<dbReference type="Gene3D" id="3.30.470.20">
    <property type="entry name" value="ATP-grasp fold, B domain"/>
    <property type="match status" value="1"/>
</dbReference>
<dbReference type="HAMAP" id="MF_00047">
    <property type="entry name" value="Dala_Dala_lig"/>
    <property type="match status" value="1"/>
</dbReference>
<dbReference type="InterPro" id="IPR011761">
    <property type="entry name" value="ATP-grasp"/>
</dbReference>
<dbReference type="InterPro" id="IPR013815">
    <property type="entry name" value="ATP_grasp_subdomain_1"/>
</dbReference>
<dbReference type="InterPro" id="IPR000291">
    <property type="entry name" value="D-Ala_lig_Van_CS"/>
</dbReference>
<dbReference type="InterPro" id="IPR005905">
    <property type="entry name" value="D_ala_D_ala"/>
</dbReference>
<dbReference type="InterPro" id="IPR011095">
    <property type="entry name" value="Dala_Dala_lig_C"/>
</dbReference>
<dbReference type="InterPro" id="IPR011127">
    <property type="entry name" value="Dala_Dala_lig_N"/>
</dbReference>
<dbReference type="InterPro" id="IPR016185">
    <property type="entry name" value="PreATP-grasp_dom_sf"/>
</dbReference>
<dbReference type="NCBIfam" id="TIGR01205">
    <property type="entry name" value="D_ala_D_alaTIGR"/>
    <property type="match status" value="1"/>
</dbReference>
<dbReference type="NCBIfam" id="NF002527">
    <property type="entry name" value="PRK01966.1-3"/>
    <property type="match status" value="1"/>
</dbReference>
<dbReference type="NCBIfam" id="NF002528">
    <property type="entry name" value="PRK01966.1-4"/>
    <property type="match status" value="1"/>
</dbReference>
<dbReference type="PANTHER" id="PTHR23132">
    <property type="entry name" value="D-ALANINE--D-ALANINE LIGASE"/>
    <property type="match status" value="1"/>
</dbReference>
<dbReference type="PANTHER" id="PTHR23132:SF25">
    <property type="entry name" value="D-ALANINE--D-ALANINE LIGASE A"/>
    <property type="match status" value="1"/>
</dbReference>
<dbReference type="Pfam" id="PF07478">
    <property type="entry name" value="Dala_Dala_lig_C"/>
    <property type="match status" value="1"/>
</dbReference>
<dbReference type="Pfam" id="PF01820">
    <property type="entry name" value="Dala_Dala_lig_N"/>
    <property type="match status" value="1"/>
</dbReference>
<dbReference type="PIRSF" id="PIRSF039102">
    <property type="entry name" value="Ddl/VanB"/>
    <property type="match status" value="1"/>
</dbReference>
<dbReference type="SUPFAM" id="SSF56059">
    <property type="entry name" value="Glutathione synthetase ATP-binding domain-like"/>
    <property type="match status" value="1"/>
</dbReference>
<dbReference type="SUPFAM" id="SSF52440">
    <property type="entry name" value="PreATP-grasp domain"/>
    <property type="match status" value="1"/>
</dbReference>
<dbReference type="PROSITE" id="PS50975">
    <property type="entry name" value="ATP_GRASP"/>
    <property type="match status" value="1"/>
</dbReference>
<dbReference type="PROSITE" id="PS00843">
    <property type="entry name" value="DALA_DALA_LIGASE_1"/>
    <property type="match status" value="1"/>
</dbReference>
<dbReference type="PROSITE" id="PS00844">
    <property type="entry name" value="DALA_DALA_LIGASE_2"/>
    <property type="match status" value="1"/>
</dbReference>
<accession>B8E569</accession>